<reference key="1">
    <citation type="journal article" date="2005" name="Nat. Genet.">
        <title>The complete genome sequence of Francisella tularensis, the causative agent of tularemia.</title>
        <authorList>
            <person name="Larsson P."/>
            <person name="Oyston P.C.F."/>
            <person name="Chain P."/>
            <person name="Chu M.C."/>
            <person name="Duffield M."/>
            <person name="Fuxelius H.-H."/>
            <person name="Garcia E."/>
            <person name="Haelltorp G."/>
            <person name="Johansson D."/>
            <person name="Isherwood K.E."/>
            <person name="Karp P.D."/>
            <person name="Larsson E."/>
            <person name="Liu Y."/>
            <person name="Michell S."/>
            <person name="Prior J."/>
            <person name="Prior R."/>
            <person name="Malfatti S."/>
            <person name="Sjoestedt A."/>
            <person name="Svensson K."/>
            <person name="Thompson N."/>
            <person name="Vergez L."/>
            <person name="Wagg J.K."/>
            <person name="Wren B.W."/>
            <person name="Lindler L.E."/>
            <person name="Andersson S.G.E."/>
            <person name="Forsman M."/>
            <person name="Titball R.W."/>
        </authorList>
    </citation>
    <scope>NUCLEOTIDE SEQUENCE [LARGE SCALE GENOMIC DNA]</scope>
    <source>
        <strain>SCHU S4 / Schu 4</strain>
    </source>
</reference>
<gene>
    <name evidence="1" type="primary">valS</name>
    <name type="ordered locus">FTT_0299</name>
</gene>
<dbReference type="EC" id="6.1.1.9" evidence="1"/>
<dbReference type="EMBL" id="AJ749949">
    <property type="protein sequence ID" value="CAG44932.1"/>
    <property type="molecule type" value="Genomic_DNA"/>
</dbReference>
<dbReference type="RefSeq" id="WP_003021639.1">
    <property type="nucleotide sequence ID" value="NC_006570.2"/>
</dbReference>
<dbReference type="RefSeq" id="YP_169348.1">
    <property type="nucleotide sequence ID" value="NC_006570.2"/>
</dbReference>
<dbReference type="SMR" id="Q5NHZ4"/>
<dbReference type="IntAct" id="Q5NHZ4">
    <property type="interactions" value="6"/>
</dbReference>
<dbReference type="STRING" id="177416.FTT_0299"/>
<dbReference type="DNASU" id="3191933"/>
<dbReference type="EnsemblBacteria" id="CAG44932">
    <property type="protein sequence ID" value="CAG44932"/>
    <property type="gene ID" value="FTT_0299"/>
</dbReference>
<dbReference type="KEGG" id="ftu:FTT_0299"/>
<dbReference type="eggNOG" id="COG0525">
    <property type="taxonomic scope" value="Bacteria"/>
</dbReference>
<dbReference type="OrthoDB" id="9810365at2"/>
<dbReference type="Proteomes" id="UP000001174">
    <property type="component" value="Chromosome"/>
</dbReference>
<dbReference type="GO" id="GO:0005829">
    <property type="term" value="C:cytosol"/>
    <property type="evidence" value="ECO:0007669"/>
    <property type="project" value="TreeGrafter"/>
</dbReference>
<dbReference type="GO" id="GO:0002161">
    <property type="term" value="F:aminoacyl-tRNA deacylase activity"/>
    <property type="evidence" value="ECO:0007669"/>
    <property type="project" value="InterPro"/>
</dbReference>
<dbReference type="GO" id="GO:0005524">
    <property type="term" value="F:ATP binding"/>
    <property type="evidence" value="ECO:0007669"/>
    <property type="project" value="UniProtKB-UniRule"/>
</dbReference>
<dbReference type="GO" id="GO:0004832">
    <property type="term" value="F:valine-tRNA ligase activity"/>
    <property type="evidence" value="ECO:0007669"/>
    <property type="project" value="UniProtKB-UniRule"/>
</dbReference>
<dbReference type="GO" id="GO:0006438">
    <property type="term" value="P:valyl-tRNA aminoacylation"/>
    <property type="evidence" value="ECO:0007669"/>
    <property type="project" value="UniProtKB-UniRule"/>
</dbReference>
<dbReference type="CDD" id="cd07962">
    <property type="entry name" value="Anticodon_Ia_Val"/>
    <property type="match status" value="1"/>
</dbReference>
<dbReference type="CDD" id="cd00817">
    <property type="entry name" value="ValRS_core"/>
    <property type="match status" value="1"/>
</dbReference>
<dbReference type="FunFam" id="1.10.287.380:FF:000001">
    <property type="entry name" value="Valine--tRNA ligase"/>
    <property type="match status" value="1"/>
</dbReference>
<dbReference type="FunFam" id="3.40.50.620:FF:000032">
    <property type="entry name" value="Valine--tRNA ligase"/>
    <property type="match status" value="1"/>
</dbReference>
<dbReference type="FunFam" id="3.40.50.620:FF:000073">
    <property type="entry name" value="Valine--tRNA ligase"/>
    <property type="match status" value="1"/>
</dbReference>
<dbReference type="FunFam" id="3.90.740.10:FF:000005">
    <property type="entry name" value="Valine--tRNA ligase, mitochondrial"/>
    <property type="match status" value="1"/>
</dbReference>
<dbReference type="Gene3D" id="3.40.50.620">
    <property type="entry name" value="HUPs"/>
    <property type="match status" value="2"/>
</dbReference>
<dbReference type="Gene3D" id="1.10.730.10">
    <property type="entry name" value="Isoleucyl-tRNA Synthetase, Domain 1"/>
    <property type="match status" value="1"/>
</dbReference>
<dbReference type="Gene3D" id="1.10.287.380">
    <property type="entry name" value="Valyl-tRNA synthetase, C-terminal domain"/>
    <property type="match status" value="1"/>
</dbReference>
<dbReference type="Gene3D" id="3.90.740.10">
    <property type="entry name" value="Valyl/Leucyl/Isoleucyl-tRNA synthetase, editing domain"/>
    <property type="match status" value="1"/>
</dbReference>
<dbReference type="HAMAP" id="MF_02004">
    <property type="entry name" value="Val_tRNA_synth_type1"/>
    <property type="match status" value="1"/>
</dbReference>
<dbReference type="InterPro" id="IPR001412">
    <property type="entry name" value="aa-tRNA-synth_I_CS"/>
</dbReference>
<dbReference type="InterPro" id="IPR002300">
    <property type="entry name" value="aa-tRNA-synth_Ia"/>
</dbReference>
<dbReference type="InterPro" id="IPR033705">
    <property type="entry name" value="Anticodon_Ia_Val"/>
</dbReference>
<dbReference type="InterPro" id="IPR013155">
    <property type="entry name" value="M/V/L/I-tRNA-synth_anticd-bd"/>
</dbReference>
<dbReference type="InterPro" id="IPR014729">
    <property type="entry name" value="Rossmann-like_a/b/a_fold"/>
</dbReference>
<dbReference type="InterPro" id="IPR010978">
    <property type="entry name" value="tRNA-bd_arm"/>
</dbReference>
<dbReference type="InterPro" id="IPR009080">
    <property type="entry name" value="tRNAsynth_Ia_anticodon-bd"/>
</dbReference>
<dbReference type="InterPro" id="IPR037118">
    <property type="entry name" value="Val-tRNA_synth_C_sf"/>
</dbReference>
<dbReference type="InterPro" id="IPR019499">
    <property type="entry name" value="Val-tRNA_synth_tRNA-bd"/>
</dbReference>
<dbReference type="InterPro" id="IPR009008">
    <property type="entry name" value="Val/Leu/Ile-tRNA-synth_edit"/>
</dbReference>
<dbReference type="InterPro" id="IPR002303">
    <property type="entry name" value="Valyl-tRNA_ligase"/>
</dbReference>
<dbReference type="NCBIfam" id="NF004349">
    <property type="entry name" value="PRK05729.1"/>
    <property type="match status" value="1"/>
</dbReference>
<dbReference type="NCBIfam" id="TIGR00422">
    <property type="entry name" value="valS"/>
    <property type="match status" value="1"/>
</dbReference>
<dbReference type="PANTHER" id="PTHR11946:SF93">
    <property type="entry name" value="VALINE--TRNA LIGASE, CHLOROPLASTIC_MITOCHONDRIAL 2"/>
    <property type="match status" value="1"/>
</dbReference>
<dbReference type="PANTHER" id="PTHR11946">
    <property type="entry name" value="VALYL-TRNA SYNTHETASES"/>
    <property type="match status" value="1"/>
</dbReference>
<dbReference type="Pfam" id="PF08264">
    <property type="entry name" value="Anticodon_1"/>
    <property type="match status" value="1"/>
</dbReference>
<dbReference type="Pfam" id="PF00133">
    <property type="entry name" value="tRNA-synt_1"/>
    <property type="match status" value="1"/>
</dbReference>
<dbReference type="Pfam" id="PF10458">
    <property type="entry name" value="Val_tRNA-synt_C"/>
    <property type="match status" value="1"/>
</dbReference>
<dbReference type="PRINTS" id="PR00986">
    <property type="entry name" value="TRNASYNTHVAL"/>
</dbReference>
<dbReference type="SUPFAM" id="SSF47323">
    <property type="entry name" value="Anticodon-binding domain of a subclass of class I aminoacyl-tRNA synthetases"/>
    <property type="match status" value="1"/>
</dbReference>
<dbReference type="SUPFAM" id="SSF52374">
    <property type="entry name" value="Nucleotidylyl transferase"/>
    <property type="match status" value="1"/>
</dbReference>
<dbReference type="SUPFAM" id="SSF46589">
    <property type="entry name" value="tRNA-binding arm"/>
    <property type="match status" value="1"/>
</dbReference>
<dbReference type="SUPFAM" id="SSF50677">
    <property type="entry name" value="ValRS/IleRS/LeuRS editing domain"/>
    <property type="match status" value="1"/>
</dbReference>
<dbReference type="PROSITE" id="PS00178">
    <property type="entry name" value="AA_TRNA_LIGASE_I"/>
    <property type="match status" value="1"/>
</dbReference>
<comment type="function">
    <text evidence="1">Catalyzes the attachment of valine to tRNA(Val). As ValRS can inadvertently accommodate and process structurally similar amino acids such as threonine, to avoid such errors, it has a 'posttransfer' editing activity that hydrolyzes mischarged Thr-tRNA(Val) in a tRNA-dependent manner.</text>
</comment>
<comment type="catalytic activity">
    <reaction evidence="1">
        <text>tRNA(Val) + L-valine + ATP = L-valyl-tRNA(Val) + AMP + diphosphate</text>
        <dbReference type="Rhea" id="RHEA:10704"/>
        <dbReference type="Rhea" id="RHEA-COMP:9672"/>
        <dbReference type="Rhea" id="RHEA-COMP:9708"/>
        <dbReference type="ChEBI" id="CHEBI:30616"/>
        <dbReference type="ChEBI" id="CHEBI:33019"/>
        <dbReference type="ChEBI" id="CHEBI:57762"/>
        <dbReference type="ChEBI" id="CHEBI:78442"/>
        <dbReference type="ChEBI" id="CHEBI:78537"/>
        <dbReference type="ChEBI" id="CHEBI:456215"/>
        <dbReference type="EC" id="6.1.1.9"/>
    </reaction>
</comment>
<comment type="subunit">
    <text evidence="1">Monomer.</text>
</comment>
<comment type="subcellular location">
    <subcellularLocation>
        <location evidence="1">Cytoplasm</location>
    </subcellularLocation>
</comment>
<comment type="domain">
    <text evidence="1">ValRS has two distinct active sites: one for aminoacylation and one for editing. The misactivated threonine is translocated from the active site to the editing site.</text>
</comment>
<comment type="domain">
    <text evidence="1">The C-terminal coiled-coil domain is crucial for aminoacylation activity.</text>
</comment>
<comment type="similarity">
    <text evidence="1">Belongs to the class-I aminoacyl-tRNA synthetase family. ValS type 1 subfamily.</text>
</comment>
<organism>
    <name type="scientific">Francisella tularensis subsp. tularensis (strain SCHU S4 / Schu 4)</name>
    <dbReference type="NCBI Taxonomy" id="177416"/>
    <lineage>
        <taxon>Bacteria</taxon>
        <taxon>Pseudomonadati</taxon>
        <taxon>Pseudomonadota</taxon>
        <taxon>Gammaproteobacteria</taxon>
        <taxon>Thiotrichales</taxon>
        <taxon>Francisellaceae</taxon>
        <taxon>Francisella</taxon>
    </lineage>
</organism>
<accession>Q5NHZ4</accession>
<sequence>MTQEINKNYNPKEIEQANYQNWEASGKFACGNTDSKDTYTIMLPPPNVTGTLHMGHGFQMSLMDILIRYNRMSGKDTLWQPGTDHAGIATQMVVERQLNAQGISRHDLGRENFVSKVWEWKELSGGTITSQMRRIGASPDWDRERFTMDKGLSDAVKKCFIKLYEDGLAYRGERLVNWDPKLKTAVSDLEVAQVDKQGSLWHFIYPVADSDEKIIIATTRPETMLGDMAVAVHPEDERYTHLVGKMINLPLTDRQIPIIADDYVEKDFGTGCVKITPAHDFNDYEMGKRHNLPMLNILTDDATLNTNVPSKYQGLDRFEARKQVVADMEALGLLDKIEPHALKVPTGDRTGEILEPYLTKQWFVKADVLAKPAIEAVEKGDVRFVPDNWKNTYFAWMRDIQDWCVSRQLWWGHRIPAWYDEAGNAYVGEDEADVRAKYNLADDIAIKQDEDVFDTWFSSALWPFSTLGWPEQTPELAKYYPTSVLVTGFDIIFFWVARMMMFGMYFMNDVPFRDIYITGLIRDSEGQKMSKSKGNVLDPVDLIDGISLDELLKKRTTGLMQPQMKAKIEKATKKEFPEGISAYGADAVRFTYAALASTSRDISFDTARVEGYRNFCNKLWNASRFVMMNLDDYKVCDNYELGVADKWIWSVLNTATADVHRHLANYRFDLVTNTIYDLVWNNYCDWYVEFAKVALKDDSLSEQQKNGVKYTLTKVLENILALAHPLIPFITESIYQQLKAHLNDAKDTIMDVSYPVATQALEAPEAEKAIVWLQNVVTTLRNMRSEVGIKPSLEISLIVKDVADKDREYLAQTEGFIKALARINNIEFNDNPPTSLSQIVEGLELNIPLAGLVDIEAEKARLDKELDKLKDEVDRVQKKLSNERFVSNAPEAVVAAEQEKLAKYQELYAKTLEKKEALG</sequence>
<proteinExistence type="inferred from homology"/>
<evidence type="ECO:0000255" key="1">
    <source>
        <dbReference type="HAMAP-Rule" id="MF_02004"/>
    </source>
</evidence>
<protein>
    <recommendedName>
        <fullName evidence="1">Valine--tRNA ligase</fullName>
        <ecNumber evidence="1">6.1.1.9</ecNumber>
    </recommendedName>
    <alternativeName>
        <fullName evidence="1">Valyl-tRNA synthetase</fullName>
        <shortName evidence="1">ValRS</shortName>
    </alternativeName>
</protein>
<feature type="chain" id="PRO_0000224479" description="Valine--tRNA ligase">
    <location>
        <begin position="1"/>
        <end position="919"/>
    </location>
</feature>
<feature type="coiled-coil region" evidence="1">
    <location>
        <begin position="849"/>
        <end position="919"/>
    </location>
</feature>
<feature type="short sequence motif" description="'HIGH' region">
    <location>
        <begin position="46"/>
        <end position="56"/>
    </location>
</feature>
<feature type="short sequence motif" description="'KMSKS' region">
    <location>
        <begin position="528"/>
        <end position="532"/>
    </location>
</feature>
<feature type="binding site" evidence="1">
    <location>
        <position position="531"/>
    </location>
    <ligand>
        <name>ATP</name>
        <dbReference type="ChEBI" id="CHEBI:30616"/>
    </ligand>
</feature>
<name>SYV_FRATT</name>
<keyword id="KW-0030">Aminoacyl-tRNA synthetase</keyword>
<keyword id="KW-0067">ATP-binding</keyword>
<keyword id="KW-0175">Coiled coil</keyword>
<keyword id="KW-0963">Cytoplasm</keyword>
<keyword id="KW-0436">Ligase</keyword>
<keyword id="KW-0547">Nucleotide-binding</keyword>
<keyword id="KW-0648">Protein biosynthesis</keyword>
<keyword id="KW-1185">Reference proteome</keyword>